<proteinExistence type="inferred from homology"/>
<gene>
    <name evidence="1" type="primary">aroC</name>
    <name type="ordered locus">NGK_1556</name>
</gene>
<organism>
    <name type="scientific">Neisseria gonorrhoeae (strain NCCP11945)</name>
    <dbReference type="NCBI Taxonomy" id="521006"/>
    <lineage>
        <taxon>Bacteria</taxon>
        <taxon>Pseudomonadati</taxon>
        <taxon>Pseudomonadota</taxon>
        <taxon>Betaproteobacteria</taxon>
        <taxon>Neisseriales</taxon>
        <taxon>Neisseriaceae</taxon>
        <taxon>Neisseria</taxon>
    </lineage>
</organism>
<accession>B4RN46</accession>
<keyword id="KW-0028">Amino-acid biosynthesis</keyword>
<keyword id="KW-0057">Aromatic amino acid biosynthesis</keyword>
<keyword id="KW-0274">FAD</keyword>
<keyword id="KW-0285">Flavoprotein</keyword>
<keyword id="KW-0288">FMN</keyword>
<keyword id="KW-0456">Lyase</keyword>
<keyword id="KW-0521">NADP</keyword>
<name>AROC_NEIG2</name>
<feature type="chain" id="PRO_1000115375" description="Chorismate synthase">
    <location>
        <begin position="1"/>
        <end position="366"/>
    </location>
</feature>
<feature type="binding site" evidence="1">
    <location>
        <position position="48"/>
    </location>
    <ligand>
        <name>NADP(+)</name>
        <dbReference type="ChEBI" id="CHEBI:58349"/>
    </ligand>
</feature>
<feature type="binding site" evidence="1">
    <location>
        <position position="54"/>
    </location>
    <ligand>
        <name>NADP(+)</name>
        <dbReference type="ChEBI" id="CHEBI:58349"/>
    </ligand>
</feature>
<feature type="binding site" evidence="1">
    <location>
        <begin position="125"/>
        <end position="127"/>
    </location>
    <ligand>
        <name>FMN</name>
        <dbReference type="ChEBI" id="CHEBI:58210"/>
    </ligand>
</feature>
<feature type="binding site" evidence="1">
    <location>
        <begin position="238"/>
        <end position="239"/>
    </location>
    <ligand>
        <name>FMN</name>
        <dbReference type="ChEBI" id="CHEBI:58210"/>
    </ligand>
</feature>
<feature type="binding site" evidence="1">
    <location>
        <position position="278"/>
    </location>
    <ligand>
        <name>FMN</name>
        <dbReference type="ChEBI" id="CHEBI:58210"/>
    </ligand>
</feature>
<feature type="binding site" evidence="1">
    <location>
        <begin position="293"/>
        <end position="297"/>
    </location>
    <ligand>
        <name>FMN</name>
        <dbReference type="ChEBI" id="CHEBI:58210"/>
    </ligand>
</feature>
<feature type="binding site" evidence="1">
    <location>
        <position position="319"/>
    </location>
    <ligand>
        <name>FMN</name>
        <dbReference type="ChEBI" id="CHEBI:58210"/>
    </ligand>
</feature>
<reference key="1">
    <citation type="journal article" date="2008" name="J. Bacteriol.">
        <title>Complete genome sequence of Neisseria gonorrhoeae NCCP11945.</title>
        <authorList>
            <person name="Chung G.T."/>
            <person name="Yoo J.S."/>
            <person name="Oh H.B."/>
            <person name="Lee Y.S."/>
            <person name="Cha S.H."/>
            <person name="Kim S.J."/>
            <person name="Yoo C.K."/>
        </authorList>
    </citation>
    <scope>NUCLEOTIDE SEQUENCE [LARGE SCALE GENOMIC DNA]</scope>
    <source>
        <strain>NCCP11945</strain>
    </source>
</reference>
<comment type="function">
    <text evidence="1">Catalyzes the anti-1,4-elimination of the C-3 phosphate and the C-6 proR hydrogen from 5-enolpyruvylshikimate-3-phosphate (EPSP) to yield chorismate, which is the branch point compound that serves as the starting substrate for the three terminal pathways of aromatic amino acid biosynthesis. This reaction introduces a second double bond into the aromatic ring system.</text>
</comment>
<comment type="catalytic activity">
    <reaction evidence="1">
        <text>5-O-(1-carboxyvinyl)-3-phosphoshikimate = chorismate + phosphate</text>
        <dbReference type="Rhea" id="RHEA:21020"/>
        <dbReference type="ChEBI" id="CHEBI:29748"/>
        <dbReference type="ChEBI" id="CHEBI:43474"/>
        <dbReference type="ChEBI" id="CHEBI:57701"/>
        <dbReference type="EC" id="4.2.3.5"/>
    </reaction>
</comment>
<comment type="cofactor">
    <cofactor evidence="1">
        <name>FMNH2</name>
        <dbReference type="ChEBI" id="CHEBI:57618"/>
    </cofactor>
    <text evidence="1">Reduced FMN (FMNH(2)).</text>
</comment>
<comment type="pathway">
    <text evidence="1">Metabolic intermediate biosynthesis; chorismate biosynthesis; chorismate from D-erythrose 4-phosphate and phosphoenolpyruvate: step 7/7.</text>
</comment>
<comment type="subunit">
    <text evidence="1">Homotetramer.</text>
</comment>
<comment type="similarity">
    <text evidence="1">Belongs to the chorismate synthase family.</text>
</comment>
<sequence>MAGNTFGQIFTVTTFGESHGAGLGCIIDGCPPGLELSEADIQFDLDRRKPGTSRHVTQRREADQVEILSGVFEGKTTGTPIALLIRNTNQRSKDYGNIATAFRPGHADYTYWHKYGTRDYRGGGRSSARETAARVAAGAVAKKWLKEKFGTEITAYVTQVGEKKIRFEGSEHISQNPFFAANQSQIAELEHYMDGVRKSLDSVGAKLHIEAANVPVGLGEPVFDRLDAEIAYAMMGINAVKGVEIGAGFDSVTQRGSEHGDELTPQGFLSNHSGGILGGISTGQDICVNIAIKPTSSIATPRRSIDIHGNPVELATRGRHDPCVGLRAAPIAEAMLALVLIDHALRHRAQNADVAADTPDISRSDK</sequence>
<dbReference type="EC" id="4.2.3.5" evidence="1"/>
<dbReference type="EMBL" id="CP001050">
    <property type="protein sequence ID" value="ACF30210.1"/>
    <property type="molecule type" value="Genomic_DNA"/>
</dbReference>
<dbReference type="RefSeq" id="WP_012503781.1">
    <property type="nucleotide sequence ID" value="NC_011035.1"/>
</dbReference>
<dbReference type="SMR" id="B4RN46"/>
<dbReference type="KEGG" id="ngk:NGK_1556"/>
<dbReference type="HOGENOM" id="CLU_034547_0_2_4"/>
<dbReference type="UniPathway" id="UPA00053">
    <property type="reaction ID" value="UER00090"/>
</dbReference>
<dbReference type="Proteomes" id="UP000002564">
    <property type="component" value="Chromosome"/>
</dbReference>
<dbReference type="GO" id="GO:0005829">
    <property type="term" value="C:cytosol"/>
    <property type="evidence" value="ECO:0007669"/>
    <property type="project" value="TreeGrafter"/>
</dbReference>
<dbReference type="GO" id="GO:0004107">
    <property type="term" value="F:chorismate synthase activity"/>
    <property type="evidence" value="ECO:0007669"/>
    <property type="project" value="UniProtKB-UniRule"/>
</dbReference>
<dbReference type="GO" id="GO:0010181">
    <property type="term" value="F:FMN binding"/>
    <property type="evidence" value="ECO:0007669"/>
    <property type="project" value="TreeGrafter"/>
</dbReference>
<dbReference type="GO" id="GO:0008652">
    <property type="term" value="P:amino acid biosynthetic process"/>
    <property type="evidence" value="ECO:0007669"/>
    <property type="project" value="UniProtKB-KW"/>
</dbReference>
<dbReference type="GO" id="GO:0009073">
    <property type="term" value="P:aromatic amino acid family biosynthetic process"/>
    <property type="evidence" value="ECO:0007669"/>
    <property type="project" value="UniProtKB-KW"/>
</dbReference>
<dbReference type="GO" id="GO:0009423">
    <property type="term" value="P:chorismate biosynthetic process"/>
    <property type="evidence" value="ECO:0007669"/>
    <property type="project" value="UniProtKB-UniRule"/>
</dbReference>
<dbReference type="CDD" id="cd07304">
    <property type="entry name" value="Chorismate_synthase"/>
    <property type="match status" value="1"/>
</dbReference>
<dbReference type="FunFam" id="3.60.150.10:FF:000001">
    <property type="entry name" value="Chorismate synthase"/>
    <property type="match status" value="1"/>
</dbReference>
<dbReference type="Gene3D" id="3.60.150.10">
    <property type="entry name" value="Chorismate synthase AroC"/>
    <property type="match status" value="1"/>
</dbReference>
<dbReference type="HAMAP" id="MF_00300">
    <property type="entry name" value="Chorismate_synth"/>
    <property type="match status" value="1"/>
</dbReference>
<dbReference type="InterPro" id="IPR000453">
    <property type="entry name" value="Chorismate_synth"/>
</dbReference>
<dbReference type="InterPro" id="IPR035904">
    <property type="entry name" value="Chorismate_synth_AroC_sf"/>
</dbReference>
<dbReference type="InterPro" id="IPR020541">
    <property type="entry name" value="Chorismate_synthase_CS"/>
</dbReference>
<dbReference type="NCBIfam" id="TIGR00033">
    <property type="entry name" value="aroC"/>
    <property type="match status" value="1"/>
</dbReference>
<dbReference type="NCBIfam" id="NF003793">
    <property type="entry name" value="PRK05382.1"/>
    <property type="match status" value="1"/>
</dbReference>
<dbReference type="PANTHER" id="PTHR21085">
    <property type="entry name" value="CHORISMATE SYNTHASE"/>
    <property type="match status" value="1"/>
</dbReference>
<dbReference type="PANTHER" id="PTHR21085:SF0">
    <property type="entry name" value="CHORISMATE SYNTHASE"/>
    <property type="match status" value="1"/>
</dbReference>
<dbReference type="Pfam" id="PF01264">
    <property type="entry name" value="Chorismate_synt"/>
    <property type="match status" value="1"/>
</dbReference>
<dbReference type="PIRSF" id="PIRSF001456">
    <property type="entry name" value="Chorismate_synth"/>
    <property type="match status" value="1"/>
</dbReference>
<dbReference type="SUPFAM" id="SSF103263">
    <property type="entry name" value="Chorismate synthase, AroC"/>
    <property type="match status" value="1"/>
</dbReference>
<dbReference type="PROSITE" id="PS00787">
    <property type="entry name" value="CHORISMATE_SYNTHASE_1"/>
    <property type="match status" value="1"/>
</dbReference>
<dbReference type="PROSITE" id="PS00788">
    <property type="entry name" value="CHORISMATE_SYNTHASE_2"/>
    <property type="match status" value="1"/>
</dbReference>
<dbReference type="PROSITE" id="PS00789">
    <property type="entry name" value="CHORISMATE_SYNTHASE_3"/>
    <property type="match status" value="1"/>
</dbReference>
<protein>
    <recommendedName>
        <fullName evidence="1">Chorismate synthase</fullName>
        <shortName evidence="1">CS</shortName>
        <ecNumber evidence="1">4.2.3.5</ecNumber>
    </recommendedName>
    <alternativeName>
        <fullName evidence="1">5-enolpyruvylshikimate-3-phosphate phospholyase</fullName>
    </alternativeName>
</protein>
<evidence type="ECO:0000255" key="1">
    <source>
        <dbReference type="HAMAP-Rule" id="MF_00300"/>
    </source>
</evidence>